<organism>
    <name type="scientific">Pyricularia oryzae (strain 70-15 / ATCC MYA-4617 / FGSC 8958)</name>
    <name type="common">Rice blast fungus</name>
    <name type="synonym">Magnaporthe oryzae</name>
    <dbReference type="NCBI Taxonomy" id="242507"/>
    <lineage>
        <taxon>Eukaryota</taxon>
        <taxon>Fungi</taxon>
        <taxon>Dikarya</taxon>
        <taxon>Ascomycota</taxon>
        <taxon>Pezizomycotina</taxon>
        <taxon>Sordariomycetes</taxon>
        <taxon>Sordariomycetidae</taxon>
        <taxon>Magnaporthales</taxon>
        <taxon>Pyriculariaceae</taxon>
        <taxon>Pyricularia</taxon>
    </lineage>
</organism>
<accession>A4QW40</accession>
<accession>G4N5H3</accession>
<evidence type="ECO:0000250" key="1"/>
<evidence type="ECO:0000305" key="2"/>
<comment type="function">
    <text evidence="1">TFIIA is a component of the transcription machinery of RNA polymerase II and plays an important role in transcriptional activation. TFIIA in a complex with tbp mediates transcriptional activity (By similarity).</text>
</comment>
<comment type="subunit">
    <text evidence="1">TFIIA is a heterodimer composed of the large TOA1 and the small TOA2 subunits.</text>
</comment>
<comment type="subcellular location">
    <subcellularLocation>
        <location evidence="1">Nucleus</location>
    </subcellularLocation>
</comment>
<comment type="similarity">
    <text evidence="2">Belongs to the TFIIA subunit 2 family.</text>
</comment>
<protein>
    <recommendedName>
        <fullName>Transcription initiation factor IIA subunit 2</fullName>
    </recommendedName>
    <alternativeName>
        <fullName>General transcription factor IIA subunit 2</fullName>
    </alternativeName>
    <alternativeName>
        <fullName>Transcription initiation factor IIA small chain</fullName>
    </alternativeName>
</protein>
<sequence>MATKKEETFYELYRRTSLGICLTDALDDLITNDRINPQLAMKILANFDRVVAETLQEKVKARLQFKGALDNYRFCDDVWTFVIKNINFKLDGGNQTIQADKVKIVSCNAKRPGTDA</sequence>
<reference key="1">
    <citation type="journal article" date="2005" name="Nature">
        <title>The genome sequence of the rice blast fungus Magnaporthe grisea.</title>
        <authorList>
            <person name="Dean R.A."/>
            <person name="Talbot N.J."/>
            <person name="Ebbole D.J."/>
            <person name="Farman M.L."/>
            <person name="Mitchell T.K."/>
            <person name="Orbach M.J."/>
            <person name="Thon M.R."/>
            <person name="Kulkarni R."/>
            <person name="Xu J.-R."/>
            <person name="Pan H."/>
            <person name="Read N.D."/>
            <person name="Lee Y.-H."/>
            <person name="Carbone I."/>
            <person name="Brown D."/>
            <person name="Oh Y.Y."/>
            <person name="Donofrio N."/>
            <person name="Jeong J.S."/>
            <person name="Soanes D.M."/>
            <person name="Djonovic S."/>
            <person name="Kolomiets E."/>
            <person name="Rehmeyer C."/>
            <person name="Li W."/>
            <person name="Harding M."/>
            <person name="Kim S."/>
            <person name="Lebrun M.-H."/>
            <person name="Bohnert H."/>
            <person name="Coughlan S."/>
            <person name="Butler J."/>
            <person name="Calvo S.E."/>
            <person name="Ma L.-J."/>
            <person name="Nicol R."/>
            <person name="Purcell S."/>
            <person name="Nusbaum C."/>
            <person name="Galagan J.E."/>
            <person name="Birren B.W."/>
        </authorList>
    </citation>
    <scope>NUCLEOTIDE SEQUENCE [LARGE SCALE GENOMIC DNA]</scope>
    <source>
        <strain>70-15 / ATCC MYA-4617 / FGSC 8958</strain>
    </source>
</reference>
<keyword id="KW-0539">Nucleus</keyword>
<keyword id="KW-1185">Reference proteome</keyword>
<keyword id="KW-0804">Transcription</keyword>
<keyword id="KW-0805">Transcription regulation</keyword>
<proteinExistence type="inferred from homology"/>
<gene>
    <name type="primary">TOA2</name>
    <name type="ORF">MGG_06107</name>
</gene>
<name>T2AG_PYRO7</name>
<dbReference type="EMBL" id="CM001233">
    <property type="protein sequence ID" value="EHA52166.1"/>
    <property type="molecule type" value="Genomic_DNA"/>
</dbReference>
<dbReference type="RefSeq" id="XP_003711973.1">
    <property type="nucleotide sequence ID" value="XM_003711925.1"/>
</dbReference>
<dbReference type="SMR" id="A4QW40"/>
<dbReference type="FunCoup" id="A4QW40">
    <property type="interactions" value="466"/>
</dbReference>
<dbReference type="STRING" id="242507.A4QW40"/>
<dbReference type="EnsemblFungi" id="MGG_06107T0">
    <property type="protein sequence ID" value="MGG_06107T0"/>
    <property type="gene ID" value="MGG_06107"/>
</dbReference>
<dbReference type="GeneID" id="2684291"/>
<dbReference type="KEGG" id="mgr:MGG_06107"/>
<dbReference type="VEuPathDB" id="FungiDB:MGG_06107"/>
<dbReference type="eggNOG" id="KOG3463">
    <property type="taxonomic scope" value="Eukaryota"/>
</dbReference>
<dbReference type="HOGENOM" id="CLU_112964_3_1_1"/>
<dbReference type="InParanoid" id="A4QW40"/>
<dbReference type="OMA" id="QYYELYR"/>
<dbReference type="OrthoDB" id="586585at2759"/>
<dbReference type="Proteomes" id="UP000009058">
    <property type="component" value="Chromosome 3"/>
</dbReference>
<dbReference type="GO" id="GO:0005672">
    <property type="term" value="C:transcription factor TFIIA complex"/>
    <property type="evidence" value="ECO:0007669"/>
    <property type="project" value="EnsemblFungi"/>
</dbReference>
<dbReference type="GO" id="GO:0000979">
    <property type="term" value="F:RNA polymerase II core promoter sequence-specific DNA binding"/>
    <property type="evidence" value="ECO:0007669"/>
    <property type="project" value="EnsemblFungi"/>
</dbReference>
<dbReference type="GO" id="GO:0017025">
    <property type="term" value="F:TBP-class protein binding"/>
    <property type="evidence" value="ECO:0007669"/>
    <property type="project" value="EnsemblFungi"/>
</dbReference>
<dbReference type="GO" id="GO:0060261">
    <property type="term" value="P:positive regulation of transcription initiation by RNA polymerase II"/>
    <property type="evidence" value="ECO:0007669"/>
    <property type="project" value="EnsemblFungi"/>
</dbReference>
<dbReference type="GO" id="GO:0051123">
    <property type="term" value="P:RNA polymerase II preinitiation complex assembly"/>
    <property type="evidence" value="ECO:0007669"/>
    <property type="project" value="EnsemblFungi"/>
</dbReference>
<dbReference type="CDD" id="cd10014">
    <property type="entry name" value="TFIIA_gamma_C"/>
    <property type="match status" value="1"/>
</dbReference>
<dbReference type="CDD" id="cd10145">
    <property type="entry name" value="TFIIA_gamma_N"/>
    <property type="match status" value="1"/>
</dbReference>
<dbReference type="FunFam" id="1.10.287.190:FF:000001">
    <property type="entry name" value="Transcription initiation factor IIA subunit 2"/>
    <property type="match status" value="1"/>
</dbReference>
<dbReference type="FunFam" id="2.30.18.10:FF:000003">
    <property type="entry name" value="Transcription initiation factor IIA subunit 2"/>
    <property type="match status" value="1"/>
</dbReference>
<dbReference type="Gene3D" id="2.30.18.10">
    <property type="entry name" value="Transcription factor IIA (TFIIA), beta-barrel domain"/>
    <property type="match status" value="1"/>
</dbReference>
<dbReference type="Gene3D" id="1.10.287.190">
    <property type="entry name" value="Transcription factor IIA gamma subunit, alpha-helical domain"/>
    <property type="match status" value="1"/>
</dbReference>
<dbReference type="InterPro" id="IPR009083">
    <property type="entry name" value="TFIIA_a-hlx"/>
</dbReference>
<dbReference type="InterPro" id="IPR009088">
    <property type="entry name" value="TFIIA_b-brl"/>
</dbReference>
<dbReference type="InterPro" id="IPR003194">
    <property type="entry name" value="TFIIA_gsu"/>
</dbReference>
<dbReference type="InterPro" id="IPR015871">
    <property type="entry name" value="TFIIA_gsu_C"/>
</dbReference>
<dbReference type="InterPro" id="IPR015872">
    <property type="entry name" value="TFIIA_gsu_N"/>
</dbReference>
<dbReference type="PANTHER" id="PTHR10966">
    <property type="entry name" value="TRANSCRIPTION INITIATION FACTOR IIA SUBUNIT 2"/>
    <property type="match status" value="1"/>
</dbReference>
<dbReference type="Pfam" id="PF02751">
    <property type="entry name" value="TFIIA_gamma_C"/>
    <property type="match status" value="1"/>
</dbReference>
<dbReference type="Pfam" id="PF02268">
    <property type="entry name" value="TFIIA_gamma_N"/>
    <property type="match status" value="1"/>
</dbReference>
<dbReference type="PIRSF" id="PIRSF009415">
    <property type="entry name" value="Hum_TFIIA_gamma"/>
    <property type="match status" value="1"/>
</dbReference>
<dbReference type="SUPFAM" id="SSF47396">
    <property type="entry name" value="Transcription factor IIA (TFIIA), alpha-helical domain"/>
    <property type="match status" value="1"/>
</dbReference>
<dbReference type="SUPFAM" id="SSF50784">
    <property type="entry name" value="Transcription factor IIA (TFIIA), beta-barrel domain"/>
    <property type="match status" value="1"/>
</dbReference>
<feature type="chain" id="PRO_0000406208" description="Transcription initiation factor IIA subunit 2">
    <location>
        <begin position="1"/>
        <end position="116"/>
    </location>
</feature>